<comment type="function">
    <text evidence="1">One of the essential components for the initiation of protein synthesis. Stabilizes the binding of IF-2 and IF-3 on the 30S subunit to which N-formylmethionyl-tRNA(fMet) subsequently binds. Helps modulate mRNA selection, yielding the 30S pre-initiation complex (PIC). Upon addition of the 50S ribosomal subunit IF-1, IF-2 and IF-3 are released leaving the mature 70S translation initiation complex.</text>
</comment>
<comment type="subunit">
    <text evidence="1">Component of the 30S ribosomal translation pre-initiation complex which assembles on the 30S ribosome in the order IF-2 and IF-3, IF-1 and N-formylmethionyl-tRNA(fMet); mRNA recruitment can occur at any time during PIC assembly.</text>
</comment>
<comment type="subcellular location">
    <subcellularLocation>
        <location evidence="1">Cytoplasm</location>
    </subcellularLocation>
</comment>
<comment type="similarity">
    <text evidence="1">Belongs to the IF-1 family.</text>
</comment>
<dbReference type="EMBL" id="CP000447">
    <property type="protein sequence ID" value="ABI72099.1"/>
    <property type="molecule type" value="Genomic_DNA"/>
</dbReference>
<dbReference type="RefSeq" id="WP_011496276.1">
    <property type="nucleotide sequence ID" value="NC_008345.1"/>
</dbReference>
<dbReference type="SMR" id="Q081G6"/>
<dbReference type="STRING" id="318167.Sfri_2253"/>
<dbReference type="GeneID" id="90568644"/>
<dbReference type="KEGG" id="sfr:Sfri_2253"/>
<dbReference type="eggNOG" id="COG0361">
    <property type="taxonomic scope" value="Bacteria"/>
</dbReference>
<dbReference type="HOGENOM" id="CLU_151267_1_0_6"/>
<dbReference type="OrthoDB" id="9803250at2"/>
<dbReference type="Proteomes" id="UP000000684">
    <property type="component" value="Chromosome"/>
</dbReference>
<dbReference type="GO" id="GO:0005829">
    <property type="term" value="C:cytosol"/>
    <property type="evidence" value="ECO:0007669"/>
    <property type="project" value="TreeGrafter"/>
</dbReference>
<dbReference type="GO" id="GO:0043022">
    <property type="term" value="F:ribosome binding"/>
    <property type="evidence" value="ECO:0007669"/>
    <property type="project" value="UniProtKB-UniRule"/>
</dbReference>
<dbReference type="GO" id="GO:0019843">
    <property type="term" value="F:rRNA binding"/>
    <property type="evidence" value="ECO:0007669"/>
    <property type="project" value="UniProtKB-UniRule"/>
</dbReference>
<dbReference type="GO" id="GO:0003743">
    <property type="term" value="F:translation initiation factor activity"/>
    <property type="evidence" value="ECO:0007669"/>
    <property type="project" value="UniProtKB-UniRule"/>
</dbReference>
<dbReference type="CDD" id="cd04451">
    <property type="entry name" value="S1_IF1"/>
    <property type="match status" value="1"/>
</dbReference>
<dbReference type="FunFam" id="2.40.50.140:FF:000002">
    <property type="entry name" value="Translation initiation factor IF-1"/>
    <property type="match status" value="1"/>
</dbReference>
<dbReference type="Gene3D" id="2.40.50.140">
    <property type="entry name" value="Nucleic acid-binding proteins"/>
    <property type="match status" value="1"/>
</dbReference>
<dbReference type="HAMAP" id="MF_00075">
    <property type="entry name" value="IF_1"/>
    <property type="match status" value="1"/>
</dbReference>
<dbReference type="InterPro" id="IPR012340">
    <property type="entry name" value="NA-bd_OB-fold"/>
</dbReference>
<dbReference type="InterPro" id="IPR006196">
    <property type="entry name" value="RNA-binding_domain_S1_IF1"/>
</dbReference>
<dbReference type="InterPro" id="IPR003029">
    <property type="entry name" value="S1_domain"/>
</dbReference>
<dbReference type="InterPro" id="IPR004368">
    <property type="entry name" value="TIF_IF1"/>
</dbReference>
<dbReference type="NCBIfam" id="TIGR00008">
    <property type="entry name" value="infA"/>
    <property type="match status" value="1"/>
</dbReference>
<dbReference type="PANTHER" id="PTHR33370">
    <property type="entry name" value="TRANSLATION INITIATION FACTOR IF-1, CHLOROPLASTIC"/>
    <property type="match status" value="1"/>
</dbReference>
<dbReference type="PANTHER" id="PTHR33370:SF1">
    <property type="entry name" value="TRANSLATION INITIATION FACTOR IF-1, CHLOROPLASTIC"/>
    <property type="match status" value="1"/>
</dbReference>
<dbReference type="Pfam" id="PF01176">
    <property type="entry name" value="eIF-1a"/>
    <property type="match status" value="1"/>
</dbReference>
<dbReference type="SMART" id="SM00316">
    <property type="entry name" value="S1"/>
    <property type="match status" value="1"/>
</dbReference>
<dbReference type="SUPFAM" id="SSF50249">
    <property type="entry name" value="Nucleic acid-binding proteins"/>
    <property type="match status" value="1"/>
</dbReference>
<dbReference type="PROSITE" id="PS50832">
    <property type="entry name" value="S1_IF1_TYPE"/>
    <property type="match status" value="1"/>
</dbReference>
<proteinExistence type="inferred from homology"/>
<name>IF1_SHEFN</name>
<protein>
    <recommendedName>
        <fullName evidence="1">Translation initiation factor IF-1</fullName>
    </recommendedName>
</protein>
<reference key="1">
    <citation type="submission" date="2006-08" db="EMBL/GenBank/DDBJ databases">
        <title>Complete sequence of Shewanella frigidimarina NCIMB 400.</title>
        <authorList>
            <consortium name="US DOE Joint Genome Institute"/>
            <person name="Copeland A."/>
            <person name="Lucas S."/>
            <person name="Lapidus A."/>
            <person name="Barry K."/>
            <person name="Detter J.C."/>
            <person name="Glavina del Rio T."/>
            <person name="Hammon N."/>
            <person name="Israni S."/>
            <person name="Dalin E."/>
            <person name="Tice H."/>
            <person name="Pitluck S."/>
            <person name="Fredrickson J.K."/>
            <person name="Kolker E."/>
            <person name="McCuel L.A."/>
            <person name="DiChristina T."/>
            <person name="Nealson K.H."/>
            <person name="Newman D."/>
            <person name="Tiedje J.M."/>
            <person name="Zhou J."/>
            <person name="Romine M.F."/>
            <person name="Culley D.E."/>
            <person name="Serres M."/>
            <person name="Chertkov O."/>
            <person name="Brettin T."/>
            <person name="Bruce D."/>
            <person name="Han C."/>
            <person name="Tapia R."/>
            <person name="Gilna P."/>
            <person name="Schmutz J."/>
            <person name="Larimer F."/>
            <person name="Land M."/>
            <person name="Hauser L."/>
            <person name="Kyrpides N."/>
            <person name="Mikhailova N."/>
            <person name="Richardson P."/>
        </authorList>
    </citation>
    <scope>NUCLEOTIDE SEQUENCE [LARGE SCALE GENOMIC DNA]</scope>
    <source>
        <strain>NCIMB 400</strain>
    </source>
</reference>
<gene>
    <name evidence="1" type="primary">infA</name>
    <name type="ordered locus">Sfri_2253</name>
</gene>
<feature type="chain" id="PRO_0000263867" description="Translation initiation factor IF-1">
    <location>
        <begin position="1"/>
        <end position="72"/>
    </location>
</feature>
<feature type="domain" description="S1-like" evidence="1">
    <location>
        <begin position="1"/>
        <end position="72"/>
    </location>
</feature>
<accession>Q081G6</accession>
<evidence type="ECO:0000255" key="1">
    <source>
        <dbReference type="HAMAP-Rule" id="MF_00075"/>
    </source>
</evidence>
<organism>
    <name type="scientific">Shewanella frigidimarina (strain NCIMB 400)</name>
    <dbReference type="NCBI Taxonomy" id="318167"/>
    <lineage>
        <taxon>Bacteria</taxon>
        <taxon>Pseudomonadati</taxon>
        <taxon>Pseudomonadota</taxon>
        <taxon>Gammaproteobacteria</taxon>
        <taxon>Alteromonadales</taxon>
        <taxon>Shewanellaceae</taxon>
        <taxon>Shewanella</taxon>
    </lineage>
</organism>
<sequence length="72" mass="8259">MAKEDNIEMQGTILETLPNTMFRVELENGHVVIAHISGKMRKNYIRILTGDKVTVQLTPYDLSKGRIVFRAR</sequence>
<keyword id="KW-0963">Cytoplasm</keyword>
<keyword id="KW-0396">Initiation factor</keyword>
<keyword id="KW-0648">Protein biosynthesis</keyword>
<keyword id="KW-1185">Reference proteome</keyword>
<keyword id="KW-0694">RNA-binding</keyword>
<keyword id="KW-0699">rRNA-binding</keyword>